<reference key="1">
    <citation type="journal article" date="2008" name="BMC Microbiol.">
        <title>Complete genome sequence of Treponema pallidum ssp. pallidum strain SS14 determined with oligonucleotide arrays.</title>
        <authorList>
            <person name="Matejkova P."/>
            <person name="Strouhal M."/>
            <person name="Smajs D."/>
            <person name="Norris S.J."/>
            <person name="Palzkill T."/>
            <person name="Petrosino J.F."/>
            <person name="Sodergren E."/>
            <person name="Norton J.E."/>
            <person name="Singh J."/>
            <person name="Richmond T.A."/>
            <person name="Molla M.N."/>
            <person name="Albert T.J."/>
            <person name="Weinstock G.M."/>
        </authorList>
    </citation>
    <scope>NUCLEOTIDE SEQUENCE [LARGE SCALE GENOMIC DNA]</scope>
    <source>
        <strain>SS14</strain>
    </source>
</reference>
<feature type="chain" id="PRO_1000095608" description="Histidine--tRNA ligase">
    <location>
        <begin position="1"/>
        <end position="442"/>
    </location>
</feature>
<accession>B2S3N0</accession>
<sequence>MRVGSAVSPKVLKGFRDLLPDEEIERALLVEKLTVALRQMGFVPIDTPALEYTEVLLRKSEGDTEKQMFRFVDKGGRDVALRFDLTVPLARFVATHYARLYFPFKRYHFAKVWRGEKPQMGRYREFTQCDFDIVGSDSVCADFEILKSIRHMLYMAGAEHIRIHVAHRGLFDRFLRALSLSDQAEHILRIIDKRAKMAPHVLTAQLESLCDPVRVQKIMTYVSAGEVDGVAPSFEHTLSAIETLTGGVSEESTRLRKIYELLCAVNIQSSYVFDPSITRGFDYYTGMVCETFLTQLPHIGSVCSGGRYDHLTALYMKDAVSGVGASIGLDRLYAAFQQLGMSREHVCFVQALIFCQDSALMDVYQKLCSYFAVQVATEVFPDPRKLSQQYAFAEKKGIRWGIFVEQRNAVVEDCLLVLRDLSTRKDTRLPAHEVRRRMAAEG</sequence>
<name>SYH_TREPS</name>
<proteinExistence type="inferred from homology"/>
<dbReference type="EC" id="6.1.1.21" evidence="1"/>
<dbReference type="EMBL" id="CP000805">
    <property type="protein sequence ID" value="ACD71059.1"/>
    <property type="molecule type" value="Genomic_DNA"/>
</dbReference>
<dbReference type="RefSeq" id="WP_010882086.1">
    <property type="nucleotide sequence ID" value="NC_021508.1"/>
</dbReference>
<dbReference type="SMR" id="B2S3N0"/>
<dbReference type="GeneID" id="93876410"/>
<dbReference type="KEGG" id="tpp:TPASS_0641"/>
<dbReference type="PATRIC" id="fig|455434.6.peg.635"/>
<dbReference type="Proteomes" id="UP000001202">
    <property type="component" value="Chromosome"/>
</dbReference>
<dbReference type="GO" id="GO:0005737">
    <property type="term" value="C:cytoplasm"/>
    <property type="evidence" value="ECO:0007669"/>
    <property type="project" value="UniProtKB-SubCell"/>
</dbReference>
<dbReference type="GO" id="GO:0005524">
    <property type="term" value="F:ATP binding"/>
    <property type="evidence" value="ECO:0007669"/>
    <property type="project" value="UniProtKB-UniRule"/>
</dbReference>
<dbReference type="GO" id="GO:0004821">
    <property type="term" value="F:histidine-tRNA ligase activity"/>
    <property type="evidence" value="ECO:0007669"/>
    <property type="project" value="UniProtKB-UniRule"/>
</dbReference>
<dbReference type="GO" id="GO:0006427">
    <property type="term" value="P:histidyl-tRNA aminoacylation"/>
    <property type="evidence" value="ECO:0007669"/>
    <property type="project" value="UniProtKB-UniRule"/>
</dbReference>
<dbReference type="CDD" id="cd00773">
    <property type="entry name" value="HisRS-like_core"/>
    <property type="match status" value="1"/>
</dbReference>
<dbReference type="Gene3D" id="3.30.930.10">
    <property type="entry name" value="Bira Bifunctional Protein, Domain 2"/>
    <property type="match status" value="1"/>
</dbReference>
<dbReference type="HAMAP" id="MF_00127">
    <property type="entry name" value="His_tRNA_synth"/>
    <property type="match status" value="1"/>
</dbReference>
<dbReference type="InterPro" id="IPR006195">
    <property type="entry name" value="aa-tRNA-synth_II"/>
</dbReference>
<dbReference type="InterPro" id="IPR045864">
    <property type="entry name" value="aa-tRNA-synth_II/BPL/LPL"/>
</dbReference>
<dbReference type="InterPro" id="IPR015807">
    <property type="entry name" value="His-tRNA-ligase"/>
</dbReference>
<dbReference type="InterPro" id="IPR041715">
    <property type="entry name" value="HisRS-like_core"/>
</dbReference>
<dbReference type="InterPro" id="IPR004516">
    <property type="entry name" value="HisRS/HisZ"/>
</dbReference>
<dbReference type="NCBIfam" id="TIGR00442">
    <property type="entry name" value="hisS"/>
    <property type="match status" value="1"/>
</dbReference>
<dbReference type="PANTHER" id="PTHR11476:SF7">
    <property type="entry name" value="HISTIDINE--TRNA LIGASE"/>
    <property type="match status" value="1"/>
</dbReference>
<dbReference type="PANTHER" id="PTHR11476">
    <property type="entry name" value="HISTIDYL-TRNA SYNTHETASE"/>
    <property type="match status" value="1"/>
</dbReference>
<dbReference type="Pfam" id="PF13393">
    <property type="entry name" value="tRNA-synt_His"/>
    <property type="match status" value="1"/>
</dbReference>
<dbReference type="PIRSF" id="PIRSF001549">
    <property type="entry name" value="His-tRNA_synth"/>
    <property type="match status" value="1"/>
</dbReference>
<dbReference type="SUPFAM" id="SSF55681">
    <property type="entry name" value="Class II aaRS and biotin synthetases"/>
    <property type="match status" value="1"/>
</dbReference>
<dbReference type="PROSITE" id="PS50862">
    <property type="entry name" value="AA_TRNA_LIGASE_II"/>
    <property type="match status" value="1"/>
</dbReference>
<keyword id="KW-0030">Aminoacyl-tRNA synthetase</keyword>
<keyword id="KW-0067">ATP-binding</keyword>
<keyword id="KW-0963">Cytoplasm</keyword>
<keyword id="KW-0436">Ligase</keyword>
<keyword id="KW-0547">Nucleotide-binding</keyword>
<keyword id="KW-0648">Protein biosynthesis</keyword>
<organism>
    <name type="scientific">Treponema pallidum subsp. pallidum (strain SS14)</name>
    <dbReference type="NCBI Taxonomy" id="455434"/>
    <lineage>
        <taxon>Bacteria</taxon>
        <taxon>Pseudomonadati</taxon>
        <taxon>Spirochaetota</taxon>
        <taxon>Spirochaetia</taxon>
        <taxon>Spirochaetales</taxon>
        <taxon>Treponemataceae</taxon>
        <taxon>Treponema</taxon>
    </lineage>
</organism>
<comment type="catalytic activity">
    <reaction evidence="1">
        <text>tRNA(His) + L-histidine + ATP = L-histidyl-tRNA(His) + AMP + diphosphate + H(+)</text>
        <dbReference type="Rhea" id="RHEA:17313"/>
        <dbReference type="Rhea" id="RHEA-COMP:9665"/>
        <dbReference type="Rhea" id="RHEA-COMP:9689"/>
        <dbReference type="ChEBI" id="CHEBI:15378"/>
        <dbReference type="ChEBI" id="CHEBI:30616"/>
        <dbReference type="ChEBI" id="CHEBI:33019"/>
        <dbReference type="ChEBI" id="CHEBI:57595"/>
        <dbReference type="ChEBI" id="CHEBI:78442"/>
        <dbReference type="ChEBI" id="CHEBI:78527"/>
        <dbReference type="ChEBI" id="CHEBI:456215"/>
        <dbReference type="EC" id="6.1.1.21"/>
    </reaction>
</comment>
<comment type="subunit">
    <text evidence="1">Homodimer.</text>
</comment>
<comment type="subcellular location">
    <subcellularLocation>
        <location evidence="1">Cytoplasm</location>
    </subcellularLocation>
</comment>
<comment type="similarity">
    <text evidence="1">Belongs to the class-II aminoacyl-tRNA synthetase family.</text>
</comment>
<evidence type="ECO:0000255" key="1">
    <source>
        <dbReference type="HAMAP-Rule" id="MF_00127"/>
    </source>
</evidence>
<gene>
    <name evidence="1" type="primary">hisS</name>
    <name type="ordered locus">TPASS_0641</name>
</gene>
<protein>
    <recommendedName>
        <fullName evidence="1">Histidine--tRNA ligase</fullName>
        <ecNumber evidence="1">6.1.1.21</ecNumber>
    </recommendedName>
    <alternativeName>
        <fullName evidence="1">Histidyl-tRNA synthetase</fullName>
        <shortName evidence="1">HisRS</shortName>
    </alternativeName>
</protein>